<feature type="chain" id="PRO_1000062116" description="Ribosomal protein L11 methyltransferase">
    <location>
        <begin position="1"/>
        <end position="317"/>
    </location>
</feature>
<feature type="binding site" evidence="1">
    <location>
        <position position="162"/>
    </location>
    <ligand>
        <name>S-adenosyl-L-methionine</name>
        <dbReference type="ChEBI" id="CHEBI:59789"/>
    </ligand>
</feature>
<feature type="binding site" evidence="1">
    <location>
        <position position="183"/>
    </location>
    <ligand>
        <name>S-adenosyl-L-methionine</name>
        <dbReference type="ChEBI" id="CHEBI:59789"/>
    </ligand>
</feature>
<feature type="binding site" evidence="1">
    <location>
        <position position="205"/>
    </location>
    <ligand>
        <name>S-adenosyl-L-methionine</name>
        <dbReference type="ChEBI" id="CHEBI:59789"/>
    </ligand>
</feature>
<feature type="binding site" evidence="1">
    <location>
        <position position="248"/>
    </location>
    <ligand>
        <name>S-adenosyl-L-methionine</name>
        <dbReference type="ChEBI" id="CHEBI:59789"/>
    </ligand>
</feature>
<comment type="function">
    <text evidence="1">Methylates ribosomal protein L11.</text>
</comment>
<comment type="catalytic activity">
    <reaction evidence="1">
        <text>L-lysyl-[protein] + 3 S-adenosyl-L-methionine = N(6),N(6),N(6)-trimethyl-L-lysyl-[protein] + 3 S-adenosyl-L-homocysteine + 3 H(+)</text>
        <dbReference type="Rhea" id="RHEA:54192"/>
        <dbReference type="Rhea" id="RHEA-COMP:9752"/>
        <dbReference type="Rhea" id="RHEA-COMP:13826"/>
        <dbReference type="ChEBI" id="CHEBI:15378"/>
        <dbReference type="ChEBI" id="CHEBI:29969"/>
        <dbReference type="ChEBI" id="CHEBI:57856"/>
        <dbReference type="ChEBI" id="CHEBI:59789"/>
        <dbReference type="ChEBI" id="CHEBI:61961"/>
    </reaction>
</comment>
<comment type="subcellular location">
    <subcellularLocation>
        <location evidence="1">Cytoplasm</location>
    </subcellularLocation>
</comment>
<comment type="similarity">
    <text evidence="1">Belongs to the methyltransferase superfamily. PrmA family.</text>
</comment>
<accession>A6TSL8</accession>
<evidence type="ECO:0000255" key="1">
    <source>
        <dbReference type="HAMAP-Rule" id="MF_00735"/>
    </source>
</evidence>
<name>PRMA_ALKMQ</name>
<gene>
    <name evidence="1" type="primary">prmA</name>
    <name type="ordered locus">Amet_3046</name>
</gene>
<reference key="1">
    <citation type="journal article" date="2016" name="Genome Announc.">
        <title>Complete genome sequence of Alkaliphilus metalliredigens strain QYMF, an alkaliphilic and metal-reducing bacterium isolated from borax-contaminated leachate ponds.</title>
        <authorList>
            <person name="Hwang C."/>
            <person name="Copeland A."/>
            <person name="Lucas S."/>
            <person name="Lapidus A."/>
            <person name="Barry K."/>
            <person name="Detter J.C."/>
            <person name="Glavina Del Rio T."/>
            <person name="Hammon N."/>
            <person name="Israni S."/>
            <person name="Dalin E."/>
            <person name="Tice H."/>
            <person name="Pitluck S."/>
            <person name="Chertkov O."/>
            <person name="Brettin T."/>
            <person name="Bruce D."/>
            <person name="Han C."/>
            <person name="Schmutz J."/>
            <person name="Larimer F."/>
            <person name="Land M.L."/>
            <person name="Hauser L."/>
            <person name="Kyrpides N."/>
            <person name="Mikhailova N."/>
            <person name="Ye Q."/>
            <person name="Zhou J."/>
            <person name="Richardson P."/>
            <person name="Fields M.W."/>
        </authorList>
    </citation>
    <scope>NUCLEOTIDE SEQUENCE [LARGE SCALE GENOMIC DNA]</scope>
    <source>
        <strain>QYMF</strain>
    </source>
</reference>
<organism>
    <name type="scientific">Alkaliphilus metalliredigens (strain QYMF)</name>
    <dbReference type="NCBI Taxonomy" id="293826"/>
    <lineage>
        <taxon>Bacteria</taxon>
        <taxon>Bacillati</taxon>
        <taxon>Bacillota</taxon>
        <taxon>Clostridia</taxon>
        <taxon>Peptostreptococcales</taxon>
        <taxon>Natronincolaceae</taxon>
        <taxon>Alkaliphilus</taxon>
    </lineage>
</organism>
<keyword id="KW-0963">Cytoplasm</keyword>
<keyword id="KW-0489">Methyltransferase</keyword>
<keyword id="KW-1185">Reference proteome</keyword>
<keyword id="KW-0949">S-adenosyl-L-methionine</keyword>
<keyword id="KW-0808">Transferase</keyword>
<dbReference type="EC" id="2.1.1.-" evidence="1"/>
<dbReference type="EMBL" id="CP000724">
    <property type="protein sequence ID" value="ABR49186.1"/>
    <property type="molecule type" value="Genomic_DNA"/>
</dbReference>
<dbReference type="RefSeq" id="WP_012064152.1">
    <property type="nucleotide sequence ID" value="NC_009633.1"/>
</dbReference>
<dbReference type="SMR" id="A6TSL8"/>
<dbReference type="STRING" id="293826.Amet_3046"/>
<dbReference type="KEGG" id="amt:Amet_3046"/>
<dbReference type="eggNOG" id="COG2264">
    <property type="taxonomic scope" value="Bacteria"/>
</dbReference>
<dbReference type="HOGENOM" id="CLU_049382_0_1_9"/>
<dbReference type="OrthoDB" id="9785995at2"/>
<dbReference type="Proteomes" id="UP000001572">
    <property type="component" value="Chromosome"/>
</dbReference>
<dbReference type="GO" id="GO:0005737">
    <property type="term" value="C:cytoplasm"/>
    <property type="evidence" value="ECO:0007669"/>
    <property type="project" value="UniProtKB-SubCell"/>
</dbReference>
<dbReference type="GO" id="GO:0016279">
    <property type="term" value="F:protein-lysine N-methyltransferase activity"/>
    <property type="evidence" value="ECO:0007669"/>
    <property type="project" value="RHEA"/>
</dbReference>
<dbReference type="GO" id="GO:0032259">
    <property type="term" value="P:methylation"/>
    <property type="evidence" value="ECO:0007669"/>
    <property type="project" value="UniProtKB-KW"/>
</dbReference>
<dbReference type="CDD" id="cd02440">
    <property type="entry name" value="AdoMet_MTases"/>
    <property type="match status" value="1"/>
</dbReference>
<dbReference type="Gene3D" id="3.40.50.150">
    <property type="entry name" value="Vaccinia Virus protein VP39"/>
    <property type="match status" value="1"/>
</dbReference>
<dbReference type="HAMAP" id="MF_00735">
    <property type="entry name" value="Methyltr_PrmA"/>
    <property type="match status" value="1"/>
</dbReference>
<dbReference type="InterPro" id="IPR050078">
    <property type="entry name" value="Ribosomal_L11_MeTrfase_PrmA"/>
</dbReference>
<dbReference type="InterPro" id="IPR004498">
    <property type="entry name" value="Ribosomal_PrmA_MeTrfase"/>
</dbReference>
<dbReference type="InterPro" id="IPR029063">
    <property type="entry name" value="SAM-dependent_MTases_sf"/>
</dbReference>
<dbReference type="NCBIfam" id="TIGR00406">
    <property type="entry name" value="prmA"/>
    <property type="match status" value="1"/>
</dbReference>
<dbReference type="PANTHER" id="PTHR43648">
    <property type="entry name" value="ELECTRON TRANSFER FLAVOPROTEIN BETA SUBUNIT LYSINE METHYLTRANSFERASE"/>
    <property type="match status" value="1"/>
</dbReference>
<dbReference type="PANTHER" id="PTHR43648:SF1">
    <property type="entry name" value="ELECTRON TRANSFER FLAVOPROTEIN BETA SUBUNIT LYSINE METHYLTRANSFERASE"/>
    <property type="match status" value="1"/>
</dbReference>
<dbReference type="Pfam" id="PF06325">
    <property type="entry name" value="PrmA"/>
    <property type="match status" value="1"/>
</dbReference>
<dbReference type="PIRSF" id="PIRSF000401">
    <property type="entry name" value="RPL11_MTase"/>
    <property type="match status" value="1"/>
</dbReference>
<dbReference type="SUPFAM" id="SSF53335">
    <property type="entry name" value="S-adenosyl-L-methionine-dependent methyltransferases"/>
    <property type="match status" value="1"/>
</dbReference>
<protein>
    <recommendedName>
        <fullName evidence="1">Ribosomal protein L11 methyltransferase</fullName>
        <shortName evidence="1">L11 Mtase</shortName>
        <ecNumber evidence="1">2.1.1.-</ecNumber>
    </recommendedName>
</protein>
<proteinExistence type="inferred from homology"/>
<sequence length="317" mass="34789">MKWIEVSIKTTSEAVEAVANILYDGGVAGVSIEDENDFSLLEQSNEAWDYVDEALLDRELEGALVKGYLPEAADLAYKLELIRQSVALLPKYGLNIGLGEVTTLEVNEEDWSHSWKKYYKPTHIGKNIVVKPTWEEYERKEGEMIIEMDPGMAFGTGTHETTMMCAQELEKIVGAKYTVFDIGCGSGILSIVAAKLGAEKVIAVDLDGTAIRVTQENVDANDVSDIVEVRHGNLMDVVTSRADVIVANIIADIIILLSKDVKNFLKKEGIFIASGIILDKVEVVKAQLIANNLEIVKVETMGEWAVIISKLKGGVDE</sequence>